<organism evidence="8">
    <name type="scientific">Danio rerio</name>
    <name type="common">Zebrafish</name>
    <name type="synonym">Brachydanio rerio</name>
    <dbReference type="NCBI Taxonomy" id="7955"/>
    <lineage>
        <taxon>Eukaryota</taxon>
        <taxon>Metazoa</taxon>
        <taxon>Chordata</taxon>
        <taxon>Craniata</taxon>
        <taxon>Vertebrata</taxon>
        <taxon>Euteleostomi</taxon>
        <taxon>Actinopterygii</taxon>
        <taxon>Neopterygii</taxon>
        <taxon>Teleostei</taxon>
        <taxon>Ostariophysi</taxon>
        <taxon>Cypriniformes</taxon>
        <taxon>Danionidae</taxon>
        <taxon>Danioninae</taxon>
        <taxon>Danio</taxon>
    </lineage>
</organism>
<gene>
    <name evidence="6" type="primary">clcc1</name>
</gene>
<reference evidence="8" key="1">
    <citation type="journal article" date="2013" name="Nature">
        <title>The zebrafish reference genome sequence and its relationship to the human genome.</title>
        <authorList>
            <person name="Howe K."/>
            <person name="Clark M.D."/>
            <person name="Torroja C.F."/>
            <person name="Torrance J."/>
            <person name="Berthelot C."/>
            <person name="Muffato M."/>
            <person name="Collins J.E."/>
            <person name="Humphray S."/>
            <person name="McLaren K."/>
            <person name="Matthews L."/>
            <person name="McLaren S."/>
            <person name="Sealy I."/>
            <person name="Caccamo M."/>
            <person name="Churcher C."/>
            <person name="Scott C."/>
            <person name="Barrett J.C."/>
            <person name="Koch R."/>
            <person name="Rauch G.J."/>
            <person name="White S."/>
            <person name="Chow W."/>
            <person name="Kilian B."/>
            <person name="Quintais L.T."/>
            <person name="Guerra-Assuncao J.A."/>
            <person name="Zhou Y."/>
            <person name="Gu Y."/>
            <person name="Yen J."/>
            <person name="Vogel J.H."/>
            <person name="Eyre T."/>
            <person name="Redmond S."/>
            <person name="Banerjee R."/>
            <person name="Chi J."/>
            <person name="Fu B."/>
            <person name="Langley E."/>
            <person name="Maguire S.F."/>
            <person name="Laird G.K."/>
            <person name="Lloyd D."/>
            <person name="Kenyon E."/>
            <person name="Donaldson S."/>
            <person name="Sehra H."/>
            <person name="Almeida-King J."/>
            <person name="Loveland J."/>
            <person name="Trevanion S."/>
            <person name="Jones M."/>
            <person name="Quail M."/>
            <person name="Willey D."/>
            <person name="Hunt A."/>
            <person name="Burton J."/>
            <person name="Sims S."/>
            <person name="McLay K."/>
            <person name="Plumb B."/>
            <person name="Davis J."/>
            <person name="Clee C."/>
            <person name="Oliver K."/>
            <person name="Clark R."/>
            <person name="Riddle C."/>
            <person name="Elliot D."/>
            <person name="Threadgold G."/>
            <person name="Harden G."/>
            <person name="Ware D."/>
            <person name="Begum S."/>
            <person name="Mortimore B."/>
            <person name="Kerry G."/>
            <person name="Heath P."/>
            <person name="Phillimore B."/>
            <person name="Tracey A."/>
            <person name="Corby N."/>
            <person name="Dunn M."/>
            <person name="Johnson C."/>
            <person name="Wood J."/>
            <person name="Clark S."/>
            <person name="Pelan S."/>
            <person name="Griffiths G."/>
            <person name="Smith M."/>
            <person name="Glithero R."/>
            <person name="Howden P."/>
            <person name="Barker N."/>
            <person name="Lloyd C."/>
            <person name="Stevens C."/>
            <person name="Harley J."/>
            <person name="Holt K."/>
            <person name="Panagiotidis G."/>
            <person name="Lovell J."/>
            <person name="Beasley H."/>
            <person name="Henderson C."/>
            <person name="Gordon D."/>
            <person name="Auger K."/>
            <person name="Wright D."/>
            <person name="Collins J."/>
            <person name="Raisen C."/>
            <person name="Dyer L."/>
            <person name="Leung K."/>
            <person name="Robertson L."/>
            <person name="Ambridge K."/>
            <person name="Leongamornlert D."/>
            <person name="McGuire S."/>
            <person name="Gilderthorp R."/>
            <person name="Griffiths C."/>
            <person name="Manthravadi D."/>
            <person name="Nichol S."/>
            <person name="Barker G."/>
            <person name="Whitehead S."/>
            <person name="Kay M."/>
            <person name="Brown J."/>
            <person name="Murnane C."/>
            <person name="Gray E."/>
            <person name="Humphries M."/>
            <person name="Sycamore N."/>
            <person name="Barker D."/>
            <person name="Saunders D."/>
            <person name="Wallis J."/>
            <person name="Babbage A."/>
            <person name="Hammond S."/>
            <person name="Mashreghi-Mohammadi M."/>
            <person name="Barr L."/>
            <person name="Martin S."/>
            <person name="Wray P."/>
            <person name="Ellington A."/>
            <person name="Matthews N."/>
            <person name="Ellwood M."/>
            <person name="Woodmansey R."/>
            <person name="Clark G."/>
            <person name="Cooper J."/>
            <person name="Tromans A."/>
            <person name="Grafham D."/>
            <person name="Skuce C."/>
            <person name="Pandian R."/>
            <person name="Andrews R."/>
            <person name="Harrison E."/>
            <person name="Kimberley A."/>
            <person name="Garnett J."/>
            <person name="Fosker N."/>
            <person name="Hall R."/>
            <person name="Garner P."/>
            <person name="Kelly D."/>
            <person name="Bird C."/>
            <person name="Palmer S."/>
            <person name="Gehring I."/>
            <person name="Berger A."/>
            <person name="Dooley C.M."/>
            <person name="Ersan-Urun Z."/>
            <person name="Eser C."/>
            <person name="Geiger H."/>
            <person name="Geisler M."/>
            <person name="Karotki L."/>
            <person name="Kirn A."/>
            <person name="Konantz J."/>
            <person name="Konantz M."/>
            <person name="Oberlander M."/>
            <person name="Rudolph-Geiger S."/>
            <person name="Teucke M."/>
            <person name="Lanz C."/>
            <person name="Raddatz G."/>
            <person name="Osoegawa K."/>
            <person name="Zhu B."/>
            <person name="Rapp A."/>
            <person name="Widaa S."/>
            <person name="Langford C."/>
            <person name="Yang F."/>
            <person name="Schuster S.C."/>
            <person name="Carter N.P."/>
            <person name="Harrow J."/>
            <person name="Ning Z."/>
            <person name="Herrero J."/>
            <person name="Searle S.M."/>
            <person name="Enright A."/>
            <person name="Geisler R."/>
            <person name="Plasterk R.H."/>
            <person name="Lee C."/>
            <person name="Westerfield M."/>
            <person name="de Jong P.J."/>
            <person name="Zon L.I."/>
            <person name="Postlethwait J.H."/>
            <person name="Nusslein-Volhard C."/>
            <person name="Hubbard T.J."/>
            <person name="Roest Crollius H."/>
            <person name="Rogers J."/>
            <person name="Stemple D.L."/>
        </authorList>
    </citation>
    <scope>NUCLEOTIDE SEQUENCE [LARGE SCALE GENOMIC DNA]</scope>
    <source>
        <strain evidence="8">Tuebingen</strain>
    </source>
</reference>
<reference evidence="7" key="2">
    <citation type="submission" date="2007-01" db="EMBL/GenBank/DDBJ databases">
        <authorList>
            <person name="Mathavan S."/>
            <person name="Yao F."/>
            <person name="Wong E."/>
            <person name="Thoreau H."/>
            <person name="Nayudu M."/>
            <person name="Govindarajan K.R."/>
            <person name="Ruan Y."/>
            <person name="Wei C."/>
        </authorList>
    </citation>
    <scope>NUCLEOTIDE SEQUENCE [MRNA] OF 207-526</scope>
</reference>
<reference evidence="7" key="3">
    <citation type="journal article" date="2018" name="PLoS Genet.">
        <title>Mutation in the intracellular chloride channel CLCC1 associated with autosomal recessive retinitis pigmentosa.</title>
        <authorList>
            <person name="Li L."/>
            <person name="Jiao X."/>
            <person name="D'Atri I."/>
            <person name="Ono F."/>
            <person name="Nelson R."/>
            <person name="Chan C.C."/>
            <person name="Nakaya N."/>
            <person name="Ma Z."/>
            <person name="Ma Y."/>
            <person name="Cai X."/>
            <person name="Zhang L."/>
            <person name="Lin S."/>
            <person name="Hameed A."/>
            <person name="Chioza B.A."/>
            <person name="Hardy H."/>
            <person name="Arno G."/>
            <person name="Hull S."/>
            <person name="Khan M.I."/>
            <person name="Fasham J."/>
            <person name="Harlalka G.V."/>
            <person name="Michaelides M."/>
            <person name="Moore A.T."/>
            <person name="Coban Akdemir Z.H."/>
            <person name="Jhangiani S."/>
            <person name="Lupski J.R."/>
            <person name="Cremers F.P.M."/>
            <person name="Qamar R."/>
            <person name="Salman A."/>
            <person name="Chilton J."/>
            <person name="Self J."/>
            <person name="Ayyagari R."/>
            <person name="Kabir F."/>
            <person name="Naeem M.A."/>
            <person name="Ali M."/>
            <person name="Akram J."/>
            <person name="Sieving P.A."/>
            <person name="Riazuddin S."/>
            <person name="Baple E.L."/>
            <person name="Riazuddin S.A."/>
            <person name="Crosby A.H."/>
            <person name="Hejtmancik J.F."/>
        </authorList>
    </citation>
    <scope>FUNCTION</scope>
    <scope>TISSUE SPECIFICITY</scope>
    <scope>DISRUPTION PHENOTYPE</scope>
</reference>
<keyword id="KW-0868">Chloride</keyword>
<keyword id="KW-0869">Chloride channel</keyword>
<keyword id="KW-0256">Endoplasmic reticulum</keyword>
<keyword id="KW-0333">Golgi apparatus</keyword>
<keyword id="KW-0407">Ion channel</keyword>
<keyword id="KW-0406">Ion transport</keyword>
<keyword id="KW-0472">Membrane</keyword>
<keyword id="KW-0539">Nucleus</keyword>
<keyword id="KW-1185">Reference proteome</keyword>
<keyword id="KW-0732">Signal</keyword>
<keyword id="KW-0812">Transmembrane</keyword>
<keyword id="KW-1133">Transmembrane helix</keyword>
<keyword id="KW-0813">Transport</keyword>
<proteinExistence type="evidence at transcript level"/>
<feature type="signal peptide" evidence="3">
    <location>
        <begin position="1"/>
        <end position="25"/>
    </location>
</feature>
<feature type="chain" id="PRO_0000449248" description="Chloride channel CLIC-like protein 1" evidence="3">
    <location>
        <begin position="26"/>
        <end position="609"/>
    </location>
</feature>
<feature type="transmembrane region" description="Helical" evidence="3">
    <location>
        <begin position="212"/>
        <end position="235"/>
    </location>
</feature>
<feature type="transmembrane region" description="Helical" evidence="3">
    <location>
        <begin position="241"/>
        <end position="260"/>
    </location>
</feature>
<feature type="transmembrane region" description="Helical" evidence="3">
    <location>
        <begin position="358"/>
        <end position="380"/>
    </location>
</feature>
<feature type="region of interest" description="Disordered" evidence="4">
    <location>
        <begin position="398"/>
        <end position="553"/>
    </location>
</feature>
<feature type="compositionally biased region" description="Basic and acidic residues" evidence="4">
    <location>
        <begin position="454"/>
        <end position="474"/>
    </location>
</feature>
<feature type="compositionally biased region" description="Basic and acidic residues" evidence="4">
    <location>
        <begin position="507"/>
        <end position="537"/>
    </location>
</feature>
<feature type="compositionally biased region" description="Low complexity" evidence="4">
    <location>
        <begin position="538"/>
        <end position="547"/>
    </location>
</feature>
<feature type="sequence conflict" description="In Ref. 2; EH475966." evidence="7" ref="2">
    <original>V</original>
    <variation>G</variation>
    <location>
        <position position="212"/>
    </location>
</feature>
<feature type="sequence conflict" description="In Ref. 2; EH475966." evidence="7" ref="2">
    <original>Y</original>
    <variation>C</variation>
    <location>
        <position position="294"/>
    </location>
</feature>
<feature type="sequence conflict" description="In Ref. 2; EH475966." evidence="7" ref="2">
    <original>E</original>
    <variation>G</variation>
    <location>
        <position position="515"/>
    </location>
</feature>
<accession>A0A2R8Q3S9</accession>
<sequence length="609" mass="69946">MKLSSSSSFGLCILVVFFCFVVIESAKIRIDGYNDEAWIDPYDMLNYDPTTKRMRKSTESESYQNVPTKRREFNSESCDVPKCPDEHECIKKLHILQKEFDEQKSKSTATLSKPVCLPVFKRFLSKLLKETSKLGLPDDGITAMHYDAEVKLSKQSLAEIQKLLNDEDGWTTGAMDEALSQILVQFKLHDYEAWKWRFEDTFHVDVDTVLKVSLIVLIIVAIICTQLWSVVSWFVQFRRMFAVSFFISLIWNWFHLYMLAFAEHKKNIVQVESFNAKCTGLKQLNWQDSLSEWYRRTWTLQDDPCKKYYEVLVVNPILLVPPTKAITITITNFITDPLKHIGEGISEFLRALLKDLPVTLQIPVLIIIILAILIFVYGSAQAAIHQVARFPRLGWRQEQPPPAVGQRQNPQLRAHEEPWEGGDARQPLPMRQDNRGNHVGNRGDQGFRDANAPENREEDRSMDIRQEFSTKRTPVETLQATGNTFPDDETDSQQRTQELDSGANVEEEVKVEEKEKKESFSVDNKEQKETKSPDRSEPITSEPPSSIDVKTVGADQGNEHLMCTKRKWAAQNGFKLQVILCEINSEASADLPEEEECFSFKHPVQETQS</sequence>
<name>CLCC1_DANRE</name>
<comment type="function">
    <text evidence="2 5">Seems to act as a chloride ion channel (By similarity). Plays a role in retina development (PubMed:30157172).</text>
</comment>
<comment type="subcellular location">
    <subcellularLocation>
        <location evidence="2">Endoplasmic reticulum membrane</location>
        <topology evidence="3">Multi-pass membrane protein</topology>
    </subcellularLocation>
    <subcellularLocation>
        <location evidence="2">Golgi apparatus membrane</location>
        <topology evidence="3">Multi-pass membrane protein</topology>
    </subcellularLocation>
    <subcellularLocation>
        <location evidence="2">Nucleus membrane</location>
        <topology evidence="3">Multi-pass membrane protein</topology>
    </subcellularLocation>
    <text evidence="1">Within the endoplasmic reticulum (ER), localizes to the mitochondria-associated ER membrane, a zone of contact between the ER and mitochondrial membranes.</text>
</comment>
<comment type="tissue specificity">
    <text evidence="5">Expressed in the hindbrain, swim bladder and the eye at 1 day post fertilization (dpf) with increased expression at 3 dpf (PubMed:30157172). At 3 dpf, most prominent expression in the retina, with strong expression in the ganglion cell layer, outer nuclear layer and the retinal pigmented epithelium (PubMed:30157172).</text>
</comment>
<comment type="disruption phenotype">
    <text evidence="5">Knockout leads to lethality at 11 dpf, with knockout larvae exhibiting abnormalities in various retinal layers including the inner plexiform layer, the outer nuclear layer and the rod photoreceptor layer and decreased function of the photoreceptor cone cells (PubMed:30157172). Morpholino knockdown results in reduced eye size with proportionately decreased lens size, thinner inner plexiform layer and outer nuclear layer after 36 hours post fertilization (hpf) (PubMed:30157172). No change in the inner nuclear layer, but increased apparent thickness of the ganglion cell layer (PubMed:30157172). Reduced number of rod cells, with existing rod cells exhibiting an abnormal morphology or pyknotic appearance, decreased opsin levels and disrupted photoreceptor cell bodies (PubMed:30157172).</text>
</comment>
<comment type="similarity">
    <text evidence="7">Belongs to the chloride channel MCLC family.</text>
</comment>
<evidence type="ECO:0000250" key="1">
    <source>
        <dbReference type="UniProtKB" id="Q96S66"/>
    </source>
</evidence>
<evidence type="ECO:0000250" key="2">
    <source>
        <dbReference type="UniProtKB" id="Q9WU61"/>
    </source>
</evidence>
<evidence type="ECO:0000255" key="3"/>
<evidence type="ECO:0000256" key="4">
    <source>
        <dbReference type="SAM" id="MobiDB-lite"/>
    </source>
</evidence>
<evidence type="ECO:0000269" key="5">
    <source>
    </source>
</evidence>
<evidence type="ECO:0000303" key="6">
    <source>
    </source>
</evidence>
<evidence type="ECO:0000305" key="7"/>
<evidence type="ECO:0000312" key="8">
    <source>
        <dbReference type="Proteomes" id="UP000000437"/>
    </source>
</evidence>
<protein>
    <recommendedName>
        <fullName evidence="7">Chloride channel CLIC-like protein 1</fullName>
    </recommendedName>
</protein>
<dbReference type="EMBL" id="CU655842">
    <property type="status" value="NOT_ANNOTATED_CDS"/>
    <property type="molecule type" value="Genomic_DNA"/>
</dbReference>
<dbReference type="EMBL" id="CU693480">
    <property type="status" value="NOT_ANNOTATED_CDS"/>
    <property type="molecule type" value="Genomic_DNA"/>
</dbReference>
<dbReference type="EMBL" id="EH475966">
    <property type="status" value="NOT_ANNOTATED_CDS"/>
    <property type="molecule type" value="mRNA"/>
</dbReference>
<dbReference type="RefSeq" id="XP_009294671.1">
    <property type="nucleotide sequence ID" value="XM_009296396.4"/>
</dbReference>
<dbReference type="FunCoup" id="A0A2R8Q3S9">
    <property type="interactions" value="1591"/>
</dbReference>
<dbReference type="STRING" id="7955.ENSDARP00000147377"/>
<dbReference type="PaxDb" id="7955-ENSDARP00000107966"/>
<dbReference type="Ensembl" id="ENSDART00000180240">
    <property type="protein sequence ID" value="ENSDARP00000147377"/>
    <property type="gene ID" value="ENSDARG00000100186"/>
</dbReference>
<dbReference type="GeneID" id="100332460"/>
<dbReference type="AGR" id="ZFIN:ZDB-GENE-121114-9"/>
<dbReference type="CTD" id="23155"/>
<dbReference type="ZFIN" id="ZDB-GENE-121114-9">
    <property type="gene designation" value="clcc1"/>
</dbReference>
<dbReference type="InParanoid" id="A0A2R8Q3S9"/>
<dbReference type="OMA" id="LVFMYCR"/>
<dbReference type="OrthoDB" id="10037397at2759"/>
<dbReference type="PRO" id="PR:A0A2R8Q3S9"/>
<dbReference type="Proteomes" id="UP000000437">
    <property type="component" value="Chromosome 22"/>
</dbReference>
<dbReference type="Bgee" id="ENSDARG00000100186">
    <property type="expression patterns" value="Expressed in mature ovarian follicle and 19 other cell types or tissues"/>
</dbReference>
<dbReference type="ExpressionAtlas" id="A0A2R8Q3S9">
    <property type="expression patterns" value="baseline"/>
</dbReference>
<dbReference type="GO" id="GO:0034707">
    <property type="term" value="C:chloride channel complex"/>
    <property type="evidence" value="ECO:0007669"/>
    <property type="project" value="UniProtKB-KW"/>
</dbReference>
<dbReference type="GO" id="GO:0005783">
    <property type="term" value="C:endoplasmic reticulum"/>
    <property type="evidence" value="ECO:0000318"/>
    <property type="project" value="GO_Central"/>
</dbReference>
<dbReference type="GO" id="GO:0005789">
    <property type="term" value="C:endoplasmic reticulum membrane"/>
    <property type="evidence" value="ECO:0007669"/>
    <property type="project" value="UniProtKB-SubCell"/>
</dbReference>
<dbReference type="GO" id="GO:0000139">
    <property type="term" value="C:Golgi membrane"/>
    <property type="evidence" value="ECO:0007669"/>
    <property type="project" value="UniProtKB-SubCell"/>
</dbReference>
<dbReference type="GO" id="GO:0016020">
    <property type="term" value="C:membrane"/>
    <property type="evidence" value="ECO:0000318"/>
    <property type="project" value="GO_Central"/>
</dbReference>
<dbReference type="GO" id="GO:0031965">
    <property type="term" value="C:nuclear membrane"/>
    <property type="evidence" value="ECO:0007669"/>
    <property type="project" value="UniProtKB-SubCell"/>
</dbReference>
<dbReference type="GO" id="GO:0005254">
    <property type="term" value="F:chloride channel activity"/>
    <property type="evidence" value="ECO:0000318"/>
    <property type="project" value="GO_Central"/>
</dbReference>
<dbReference type="GO" id="GO:0060041">
    <property type="term" value="P:retina development in camera-type eye"/>
    <property type="evidence" value="ECO:0000315"/>
    <property type="project" value="ZFIN"/>
</dbReference>
<dbReference type="InterPro" id="IPR009231">
    <property type="entry name" value="Chloride_chnl_CLIC-like"/>
</dbReference>
<dbReference type="PANTHER" id="PTHR34093">
    <property type="entry name" value="CHLORIDE CHANNEL CLIC-LIKE PROTEIN 1"/>
    <property type="match status" value="1"/>
</dbReference>
<dbReference type="PANTHER" id="PTHR34093:SF1">
    <property type="entry name" value="CHLORIDE CHANNEL CLIC-LIKE PROTEIN 1"/>
    <property type="match status" value="1"/>
</dbReference>
<dbReference type="Pfam" id="PF05934">
    <property type="entry name" value="MCLC"/>
    <property type="match status" value="1"/>
</dbReference>